<sequence length="393" mass="45521">MAVPTTRKDLMIVNMGPHHPSMHGVLRLIVTLDGEDVIDCEPIVGYLHRGMEKIAENRTIIQYLPYVTRWDYLATMFTEAITVNGPEQLGNIQVPKRASYIRVIMLELSRIASHLLWLGPFMADIGAQTPFFYILRERELIYDLFEAATGMRMMHNYFRIGGVAADLPYGWIDKCLDFCDYFLIGLTEYQKLITRNPIFLERVENVGIIGGEEAINWGLSGPMLRASGIQWDLRKVDHYECYDEFDWEVQWQKEGDSLARYLIRIGEMAESVKIIQQALEGIPGGPYENLEIRRFNRIKYPEWNDFEYRFISKKPSPAFELSKQELYVRVEAPKGELGIFLIGDQSVFPWRWKIRPPGFINLQILPQLVKKMKLADIMTILGSIDIIMGEVDR</sequence>
<gene>
    <name evidence="1" type="primary">ndhH</name>
</gene>
<feature type="chain" id="PRO_0000118611" description="NAD(P)H-quinone oxidoreductase subunit H, chloroplastic">
    <location>
        <begin position="1"/>
        <end position="393"/>
    </location>
</feature>
<name>NDHH_SPIOL</name>
<organism>
    <name type="scientific">Spinacia oleracea</name>
    <name type="common">Spinach</name>
    <dbReference type="NCBI Taxonomy" id="3562"/>
    <lineage>
        <taxon>Eukaryota</taxon>
        <taxon>Viridiplantae</taxon>
        <taxon>Streptophyta</taxon>
        <taxon>Embryophyta</taxon>
        <taxon>Tracheophyta</taxon>
        <taxon>Spermatophyta</taxon>
        <taxon>Magnoliopsida</taxon>
        <taxon>eudicotyledons</taxon>
        <taxon>Gunneridae</taxon>
        <taxon>Pentapetalae</taxon>
        <taxon>Caryophyllales</taxon>
        <taxon>Chenopodiaceae</taxon>
        <taxon>Chenopodioideae</taxon>
        <taxon>Anserineae</taxon>
        <taxon>Spinacia</taxon>
    </lineage>
</organism>
<proteinExistence type="evidence at protein level"/>
<accession>Q9M3I5</accession>
<evidence type="ECO:0000255" key="1">
    <source>
        <dbReference type="HAMAP-Rule" id="MF_01358"/>
    </source>
</evidence>
<dbReference type="EC" id="7.1.1.-" evidence="1"/>
<dbReference type="EMBL" id="AJ400848">
    <property type="protein sequence ID" value="CAB88790.1"/>
    <property type="molecule type" value="Genomic_DNA"/>
</dbReference>
<dbReference type="RefSeq" id="NP_054994.1">
    <property type="nucleotide sequence ID" value="NC_002202.1"/>
</dbReference>
<dbReference type="PDB" id="9GRX">
    <property type="method" value="EM"/>
    <property type="resolution" value="3.19 A"/>
    <property type="chains" value="H=5-393"/>
</dbReference>
<dbReference type="PDBsum" id="9GRX"/>
<dbReference type="EMDB" id="EMD-51527"/>
<dbReference type="SMR" id="Q9M3I5"/>
<dbReference type="FunCoup" id="Q9M3I5">
    <property type="interactions" value="12"/>
</dbReference>
<dbReference type="STRING" id="3562.Q9M3I5"/>
<dbReference type="GeneID" id="2715593"/>
<dbReference type="KEGG" id="soe:2715593"/>
<dbReference type="InParanoid" id="Q9M3I5"/>
<dbReference type="OrthoDB" id="1845069at2759"/>
<dbReference type="Proteomes" id="UP001155700">
    <property type="component" value="Chloroplast Pltd"/>
</dbReference>
<dbReference type="GO" id="GO:0009535">
    <property type="term" value="C:chloroplast thylakoid membrane"/>
    <property type="evidence" value="ECO:0007669"/>
    <property type="project" value="UniProtKB-SubCell"/>
</dbReference>
<dbReference type="GO" id="GO:0051287">
    <property type="term" value="F:NAD binding"/>
    <property type="evidence" value="ECO:0007669"/>
    <property type="project" value="InterPro"/>
</dbReference>
<dbReference type="GO" id="GO:0016655">
    <property type="term" value="F:oxidoreductase activity, acting on NAD(P)H, quinone or similar compound as acceptor"/>
    <property type="evidence" value="ECO:0007669"/>
    <property type="project" value="UniProtKB-UniRule"/>
</dbReference>
<dbReference type="GO" id="GO:0048038">
    <property type="term" value="F:quinone binding"/>
    <property type="evidence" value="ECO:0007669"/>
    <property type="project" value="UniProtKB-KW"/>
</dbReference>
<dbReference type="GO" id="GO:0019684">
    <property type="term" value="P:photosynthesis, light reaction"/>
    <property type="evidence" value="ECO:0007669"/>
    <property type="project" value="UniProtKB-UniRule"/>
</dbReference>
<dbReference type="FunFam" id="1.10.645.10:FF:000003">
    <property type="entry name" value="NAD(P)H-quinone oxidoreductase subunit H, chloroplastic"/>
    <property type="match status" value="1"/>
</dbReference>
<dbReference type="Gene3D" id="1.10.645.10">
    <property type="entry name" value="Cytochrome-c3 Hydrogenase, chain B"/>
    <property type="match status" value="1"/>
</dbReference>
<dbReference type="HAMAP" id="MF_01358">
    <property type="entry name" value="NDH1_NuoD"/>
    <property type="match status" value="1"/>
</dbReference>
<dbReference type="InterPro" id="IPR001135">
    <property type="entry name" value="NADH_Q_OxRdtase_suD"/>
</dbReference>
<dbReference type="InterPro" id="IPR014029">
    <property type="entry name" value="NADH_UbQ_OxRdtase_49kDa_CS"/>
</dbReference>
<dbReference type="InterPro" id="IPR022885">
    <property type="entry name" value="NDH1_su_D/H"/>
</dbReference>
<dbReference type="InterPro" id="IPR029014">
    <property type="entry name" value="NiFe-Hase_large"/>
</dbReference>
<dbReference type="NCBIfam" id="NF004739">
    <property type="entry name" value="PRK06075.1"/>
    <property type="match status" value="1"/>
</dbReference>
<dbReference type="NCBIfam" id="NF005649">
    <property type="entry name" value="PRK07415.1"/>
    <property type="match status" value="1"/>
</dbReference>
<dbReference type="PANTHER" id="PTHR11993:SF10">
    <property type="entry name" value="NADH DEHYDROGENASE [UBIQUINONE] IRON-SULFUR PROTEIN 2, MITOCHONDRIAL"/>
    <property type="match status" value="1"/>
</dbReference>
<dbReference type="PANTHER" id="PTHR11993">
    <property type="entry name" value="NADH-UBIQUINONE OXIDOREDUCTASE 49 KDA SUBUNIT"/>
    <property type="match status" value="1"/>
</dbReference>
<dbReference type="Pfam" id="PF00346">
    <property type="entry name" value="Complex1_49kDa"/>
    <property type="match status" value="1"/>
</dbReference>
<dbReference type="SUPFAM" id="SSF56762">
    <property type="entry name" value="HydB/Nqo4-like"/>
    <property type="match status" value="1"/>
</dbReference>
<dbReference type="PROSITE" id="PS00535">
    <property type="entry name" value="COMPLEX1_49K"/>
    <property type="match status" value="1"/>
</dbReference>
<comment type="function">
    <text evidence="1">NDH shuttles electrons from NAD(P)H:plastoquinone, via FMN and iron-sulfur (Fe-S) centers, to quinones in the photosynthetic chain and possibly in a chloroplast respiratory chain. The immediate electron acceptor for the enzyme in this species is believed to be plastoquinone. Couples the redox reaction to proton translocation, and thus conserves the redox energy in a proton gradient.</text>
</comment>
<comment type="catalytic activity">
    <reaction evidence="1">
        <text>a plastoquinone + NADH + (n+1) H(+)(in) = a plastoquinol + NAD(+) + n H(+)(out)</text>
        <dbReference type="Rhea" id="RHEA:42608"/>
        <dbReference type="Rhea" id="RHEA-COMP:9561"/>
        <dbReference type="Rhea" id="RHEA-COMP:9562"/>
        <dbReference type="ChEBI" id="CHEBI:15378"/>
        <dbReference type="ChEBI" id="CHEBI:17757"/>
        <dbReference type="ChEBI" id="CHEBI:57540"/>
        <dbReference type="ChEBI" id="CHEBI:57945"/>
        <dbReference type="ChEBI" id="CHEBI:62192"/>
    </reaction>
</comment>
<comment type="catalytic activity">
    <reaction evidence="1">
        <text>a plastoquinone + NADPH + (n+1) H(+)(in) = a plastoquinol + NADP(+) + n H(+)(out)</text>
        <dbReference type="Rhea" id="RHEA:42612"/>
        <dbReference type="Rhea" id="RHEA-COMP:9561"/>
        <dbReference type="Rhea" id="RHEA-COMP:9562"/>
        <dbReference type="ChEBI" id="CHEBI:15378"/>
        <dbReference type="ChEBI" id="CHEBI:17757"/>
        <dbReference type="ChEBI" id="CHEBI:57783"/>
        <dbReference type="ChEBI" id="CHEBI:58349"/>
        <dbReference type="ChEBI" id="CHEBI:62192"/>
    </reaction>
</comment>
<comment type="subunit">
    <text evidence="1">NDH is composed of at least 16 different subunits, 5 of which are encoded in the nucleus.</text>
</comment>
<comment type="subcellular location">
    <subcellularLocation>
        <location evidence="1">Plastid</location>
        <location evidence="1">Chloroplast thylakoid membrane</location>
        <topology evidence="1">Peripheral membrane protein</topology>
        <orientation evidence="1">Stromal side</orientation>
    </subcellularLocation>
</comment>
<comment type="similarity">
    <text evidence="1">Belongs to the complex I 49 kDa subunit family.</text>
</comment>
<geneLocation type="chloroplast"/>
<protein>
    <recommendedName>
        <fullName evidence="1">NAD(P)H-quinone oxidoreductase subunit H, chloroplastic</fullName>
        <ecNumber evidence="1">7.1.1.-</ecNumber>
    </recommendedName>
    <alternativeName>
        <fullName>NAD(P)H dehydrogenase subunit H</fullName>
    </alternativeName>
    <alternativeName>
        <fullName evidence="1">NADH-plastoquinone oxidoreductase 49 kDa subunit</fullName>
    </alternativeName>
    <alternativeName>
        <fullName evidence="1">NADH-plastoquinone oxidoreductase subunit H</fullName>
    </alternativeName>
</protein>
<keyword id="KW-0002">3D-structure</keyword>
<keyword id="KW-0150">Chloroplast</keyword>
<keyword id="KW-0472">Membrane</keyword>
<keyword id="KW-0520">NAD</keyword>
<keyword id="KW-0521">NADP</keyword>
<keyword id="KW-0934">Plastid</keyword>
<keyword id="KW-0618">Plastoquinone</keyword>
<keyword id="KW-0874">Quinone</keyword>
<keyword id="KW-1185">Reference proteome</keyword>
<keyword id="KW-0793">Thylakoid</keyword>
<keyword id="KW-1278">Translocase</keyword>
<keyword id="KW-0813">Transport</keyword>
<reference key="1">
    <citation type="journal article" date="2001" name="Plant Mol. Biol.">
        <title>The plastid chromosome of spinach (Spinacia oleracea): complete nucleotide sequence and gene organization.</title>
        <authorList>
            <person name="Schmitz-Linneweber C."/>
            <person name="Maier R.M."/>
            <person name="Alcaraz J.-P."/>
            <person name="Cottet A."/>
            <person name="Herrmann R.G."/>
            <person name="Mache R."/>
        </authorList>
    </citation>
    <scope>NUCLEOTIDE SEQUENCE [LARGE SCALE GENOMIC DNA]</scope>
    <source>
        <strain>cv. Geant d'hiver</strain>
        <strain>cv. Monatol</strain>
    </source>
</reference>